<name>MATK_PROLU</name>
<comment type="function">
    <text evidence="1">Usually encoded in the trnK tRNA gene intron. Probably assists in splicing its own and other chloroplast group II introns.</text>
</comment>
<comment type="subcellular location">
    <subcellularLocation>
        <location>Plastid</location>
        <location>Chloroplast</location>
    </subcellularLocation>
</comment>
<comment type="similarity">
    <text evidence="1">Belongs to the intron maturase 2 family. MatK subfamily.</text>
</comment>
<organism>
    <name type="scientific">Proboscidea louisianica</name>
    <name type="common">Louisiana Devil's-claw</name>
    <name type="synonym">Martynia louisianica</name>
    <dbReference type="NCBI Taxonomy" id="9786"/>
    <lineage>
        <taxon>Eukaryota</taxon>
        <taxon>Viridiplantae</taxon>
        <taxon>Streptophyta</taxon>
        <taxon>Embryophyta</taxon>
        <taxon>Tracheophyta</taxon>
        <taxon>Spermatophyta</taxon>
        <taxon>Magnoliopsida</taxon>
        <taxon>eudicotyledons</taxon>
        <taxon>Gunneridae</taxon>
        <taxon>Pentapetalae</taxon>
        <taxon>asterids</taxon>
        <taxon>lamiids</taxon>
        <taxon>Lamiales</taxon>
        <taxon>Martyniaceae</taxon>
        <taxon>Proboscidea</taxon>
    </lineage>
</organism>
<feature type="chain" id="PRO_0000143650" description="Maturase K">
    <location>
        <begin position="1"/>
        <end position="500"/>
    </location>
</feature>
<keyword id="KW-0150">Chloroplast</keyword>
<keyword id="KW-0507">mRNA processing</keyword>
<keyword id="KW-0934">Plastid</keyword>
<keyword id="KW-0694">RNA-binding</keyword>
<keyword id="KW-0819">tRNA processing</keyword>
<evidence type="ECO:0000255" key="1">
    <source>
        <dbReference type="HAMAP-Rule" id="MF_01390"/>
    </source>
</evidence>
<protein>
    <recommendedName>
        <fullName evidence="1">Maturase K</fullName>
    </recommendedName>
    <alternativeName>
        <fullName evidence="1">Intron maturase</fullName>
    </alternativeName>
</protein>
<reference key="1">
    <citation type="journal article" date="2004" name="Plant Biol.">
        <title>Evolution of carnivory in lentibulariaceae and the Lamiales.</title>
        <authorList>
            <person name="Mueller K.F."/>
            <person name="Borsch T."/>
            <person name="Legendre L."/>
            <person name="Porembski S."/>
            <person name="Theisen I."/>
            <person name="Barthlott W."/>
        </authorList>
    </citation>
    <scope>NUCLEOTIDE SEQUENCE [GENOMIC DNA]</scope>
</reference>
<dbReference type="EMBL" id="AF531809">
    <property type="protein sequence ID" value="AAP87869.1"/>
    <property type="molecule type" value="Genomic_DNA"/>
</dbReference>
<dbReference type="GO" id="GO:0009507">
    <property type="term" value="C:chloroplast"/>
    <property type="evidence" value="ECO:0007669"/>
    <property type="project" value="UniProtKB-SubCell"/>
</dbReference>
<dbReference type="GO" id="GO:0003723">
    <property type="term" value="F:RNA binding"/>
    <property type="evidence" value="ECO:0007669"/>
    <property type="project" value="UniProtKB-KW"/>
</dbReference>
<dbReference type="GO" id="GO:0006397">
    <property type="term" value="P:mRNA processing"/>
    <property type="evidence" value="ECO:0007669"/>
    <property type="project" value="UniProtKB-KW"/>
</dbReference>
<dbReference type="GO" id="GO:0008380">
    <property type="term" value="P:RNA splicing"/>
    <property type="evidence" value="ECO:0007669"/>
    <property type="project" value="UniProtKB-UniRule"/>
</dbReference>
<dbReference type="GO" id="GO:0008033">
    <property type="term" value="P:tRNA processing"/>
    <property type="evidence" value="ECO:0007669"/>
    <property type="project" value="UniProtKB-KW"/>
</dbReference>
<dbReference type="HAMAP" id="MF_01390">
    <property type="entry name" value="MatK"/>
    <property type="match status" value="1"/>
</dbReference>
<dbReference type="InterPro" id="IPR024937">
    <property type="entry name" value="Domain_X"/>
</dbReference>
<dbReference type="InterPro" id="IPR002866">
    <property type="entry name" value="Maturase_MatK"/>
</dbReference>
<dbReference type="InterPro" id="IPR024942">
    <property type="entry name" value="Maturase_MatK_N"/>
</dbReference>
<dbReference type="PANTHER" id="PTHR34811">
    <property type="entry name" value="MATURASE K"/>
    <property type="match status" value="1"/>
</dbReference>
<dbReference type="PANTHER" id="PTHR34811:SF1">
    <property type="entry name" value="MATURASE K"/>
    <property type="match status" value="1"/>
</dbReference>
<dbReference type="Pfam" id="PF01348">
    <property type="entry name" value="Intron_maturas2"/>
    <property type="match status" value="1"/>
</dbReference>
<dbReference type="Pfam" id="PF01824">
    <property type="entry name" value="MatK_N"/>
    <property type="match status" value="1"/>
</dbReference>
<geneLocation type="chloroplast"/>
<proteinExistence type="inferred from homology"/>
<sequence>MEEIQRYLQLERSQQHDFLYPLIFQEYIYTFAHDHGFSRSIWSKNRGYDNKSSLLIVKRLITRMYQQNHFLISLNDSNQNPFWARNKNLYSQIISEGFAFIVEIPFSIRLISCLEGKKIVKSQNLRSIHSIFPFLEXNFSHLNFVLDILIPHPVHVEILDASSLHLLRFFLNEYCNWNSLITPKKASSSFSKINQRLFLFLYNSHVCEYESIFVFLRNQSSHLRSTSSGVLLERIYFYGKIEHLVNVFVTVKDFQANLWLVKEPCMHYIRYQRKSILASKGTSLFMNKWKCYLVTFWQWHFSLWFHPSRIYINQLSNHSLEFLGYLSSVRMNPSVVRSQILENAFLINNAIKKFDTLVPIIPLIASLAKAKFCNVLGHPISKPVRADLSDSNIIDRFGCICRNLSHYHSGSSKKKSLYRIKYILRLSCARTLARKHKSTVRAFLKRLGSELLEQFLMSEEDVLFXTFXKASSTLRGVNNSRIWYVDIISINDLAXHKSKF</sequence>
<gene>
    <name evidence="1" type="primary">matK</name>
</gene>
<accession>Q7YKM5</accession>